<protein>
    <recommendedName>
        <fullName>Oxygen-evolving enhancer protein 2, chloroplastic</fullName>
        <shortName>OEE2</shortName>
    </recommendedName>
    <alternativeName>
        <fullName>23 kDa subunit of oxygen evolving system of photosystem II</fullName>
    </alternativeName>
    <alternativeName>
        <fullName>23 kDa thylakoid membrane protein</fullName>
    </alternativeName>
    <alternativeName>
        <fullName>OEC 23 kDa subunit</fullName>
    </alternativeName>
</protein>
<keyword id="KW-0150">Chloroplast</keyword>
<keyword id="KW-0472">Membrane</keyword>
<keyword id="KW-0602">Photosynthesis</keyword>
<keyword id="KW-0604">Photosystem II</keyword>
<keyword id="KW-0934">Plastid</keyword>
<keyword id="KW-1185">Reference proteome</keyword>
<keyword id="KW-0793">Thylakoid</keyword>
<keyword id="KW-0809">Transit peptide</keyword>
<accession>Q00434</accession>
<gene>
    <name type="primary">PSBP</name>
</gene>
<organism>
    <name type="scientific">Triticum aestivum</name>
    <name type="common">Wheat</name>
    <dbReference type="NCBI Taxonomy" id="4565"/>
    <lineage>
        <taxon>Eukaryota</taxon>
        <taxon>Viridiplantae</taxon>
        <taxon>Streptophyta</taxon>
        <taxon>Embryophyta</taxon>
        <taxon>Tracheophyta</taxon>
        <taxon>Spermatophyta</taxon>
        <taxon>Magnoliopsida</taxon>
        <taxon>Liliopsida</taxon>
        <taxon>Poales</taxon>
        <taxon>Poaceae</taxon>
        <taxon>BOP clade</taxon>
        <taxon>Pooideae</taxon>
        <taxon>Triticodae</taxon>
        <taxon>Triticeae</taxon>
        <taxon>Triticinae</taxon>
        <taxon>Triticum</taxon>
    </lineage>
</organism>
<comment type="function">
    <text>May be involved in the regulation of photosystem II.</text>
</comment>
<comment type="subcellular location">
    <subcellularLocation>
        <location>Plastid</location>
        <location>Chloroplast thylakoid membrane</location>
    </subcellularLocation>
    <text>Associated with the photosystem II complex.</text>
</comment>
<comment type="induction">
    <text>By light.</text>
</comment>
<comment type="similarity">
    <text evidence="2">Belongs to the PsbP family.</text>
</comment>
<dbReference type="EMBL" id="X57407">
    <property type="protein sequence ID" value="CAA40669.1"/>
    <property type="molecule type" value="mRNA"/>
</dbReference>
<dbReference type="PIR" id="S22763">
    <property type="entry name" value="S22763"/>
</dbReference>
<dbReference type="SMR" id="Q00434"/>
<dbReference type="STRING" id="4565.Q00434"/>
<dbReference type="PaxDb" id="4565-Traes_2AL_0A039E562.1"/>
<dbReference type="eggNOG" id="ENOG502QUMW">
    <property type="taxonomic scope" value="Eukaryota"/>
</dbReference>
<dbReference type="Proteomes" id="UP000019116">
    <property type="component" value="Unplaced"/>
</dbReference>
<dbReference type="ExpressionAtlas" id="Q00434">
    <property type="expression patterns" value="baseline and differential"/>
</dbReference>
<dbReference type="GO" id="GO:0009535">
    <property type="term" value="C:chloroplast thylakoid membrane"/>
    <property type="evidence" value="ECO:0007669"/>
    <property type="project" value="UniProtKB-SubCell"/>
</dbReference>
<dbReference type="GO" id="GO:0019898">
    <property type="term" value="C:extrinsic component of membrane"/>
    <property type="evidence" value="ECO:0007669"/>
    <property type="project" value="InterPro"/>
</dbReference>
<dbReference type="GO" id="GO:0009654">
    <property type="term" value="C:photosystem II oxygen evolving complex"/>
    <property type="evidence" value="ECO:0007669"/>
    <property type="project" value="InterPro"/>
</dbReference>
<dbReference type="GO" id="GO:0005509">
    <property type="term" value="F:calcium ion binding"/>
    <property type="evidence" value="ECO:0007669"/>
    <property type="project" value="InterPro"/>
</dbReference>
<dbReference type="GO" id="GO:0015979">
    <property type="term" value="P:photosynthesis"/>
    <property type="evidence" value="ECO:0007669"/>
    <property type="project" value="UniProtKB-KW"/>
</dbReference>
<dbReference type="Gene3D" id="3.40.1000.10">
    <property type="entry name" value="Mog1/PsbP, alpha/beta/alpha sandwich"/>
    <property type="match status" value="1"/>
</dbReference>
<dbReference type="InterPro" id="IPR016123">
    <property type="entry name" value="Mog1/PsbP_a/b/a-sand"/>
</dbReference>
<dbReference type="InterPro" id="IPR002683">
    <property type="entry name" value="PsbP_C"/>
</dbReference>
<dbReference type="PANTHER" id="PTHR31407">
    <property type="match status" value="1"/>
</dbReference>
<dbReference type="PANTHER" id="PTHR31407:SF6">
    <property type="entry name" value="OXYGEN-EVOLVING ENHANCER PROTEIN 2-1, CHLOROPLASTIC"/>
    <property type="match status" value="1"/>
</dbReference>
<dbReference type="Pfam" id="PF01789">
    <property type="entry name" value="PsbP"/>
    <property type="match status" value="1"/>
</dbReference>
<dbReference type="SUPFAM" id="SSF55724">
    <property type="entry name" value="Mog1p/PsbP-like"/>
    <property type="match status" value="1"/>
</dbReference>
<proteinExistence type="evidence at transcript level"/>
<sequence>MASTSCFLHQSTARLAASARPAPAVGRTQLFVCKAQKNDEAASDAAVVTSRRAALSLLAGAAAIAVKVSPAAAAYGEAANVFGKAKKNTDFVAYSGEGFKLMIPAKWNPSKEREFPGQVLRYEDNFDATSNLSVIINPTTKKTITDYGSPEEFLSQVGFLLGQQSYGGKTDSEGGFESDAVATANVLESSAPVVDGKQYYSITVLTRTADGDEGGKHQLITATVADGKLYVCKAQRDKRWFKGAKKFVENAAGSFSVA</sequence>
<name>PSBP_WHEAT</name>
<feature type="transit peptide" description="Chloroplast" evidence="1">
    <location>
        <begin position="1"/>
        <end position="73"/>
    </location>
</feature>
<feature type="chain" id="PRO_0000029586" description="Oxygen-evolving enhancer protein 2, chloroplastic">
    <location>
        <begin position="74"/>
        <end position="258"/>
    </location>
</feature>
<evidence type="ECO:0000250" key="1"/>
<evidence type="ECO:0000305" key="2"/>
<reference key="1">
    <citation type="journal article" date="1991" name="Plant Mol. Biol.">
        <title>Nucleotide sequence of cDNA encoding the precursor of the 23 kDa protein of the photosynthetic oxygen-evolving complex from wheat.</title>
        <authorList>
            <person name="James H.E."/>
            <person name="Robinson C."/>
        </authorList>
    </citation>
    <scope>NUCLEOTIDE SEQUENCE [MRNA]</scope>
    <source>
        <strain>cv. Avalon</strain>
        <tissue>Leaf</tissue>
    </source>
</reference>